<accession>B7UIW0</accession>
<evidence type="ECO:0000255" key="1">
    <source>
        <dbReference type="HAMAP-Rule" id="MF_01603"/>
    </source>
</evidence>
<gene>
    <name evidence="1" type="primary">hldE</name>
    <name type="ordered locus">E2348C_3345</name>
</gene>
<keyword id="KW-0007">Acetylation</keyword>
<keyword id="KW-0067">ATP-binding</keyword>
<keyword id="KW-0119">Carbohydrate metabolism</keyword>
<keyword id="KW-0418">Kinase</keyword>
<keyword id="KW-0511">Multifunctional enzyme</keyword>
<keyword id="KW-0547">Nucleotide-binding</keyword>
<keyword id="KW-0548">Nucleotidyltransferase</keyword>
<keyword id="KW-1185">Reference proteome</keyword>
<keyword id="KW-0808">Transferase</keyword>
<organism>
    <name type="scientific">Escherichia coli O127:H6 (strain E2348/69 / EPEC)</name>
    <dbReference type="NCBI Taxonomy" id="574521"/>
    <lineage>
        <taxon>Bacteria</taxon>
        <taxon>Pseudomonadati</taxon>
        <taxon>Pseudomonadota</taxon>
        <taxon>Gammaproteobacteria</taxon>
        <taxon>Enterobacterales</taxon>
        <taxon>Enterobacteriaceae</taxon>
        <taxon>Escherichia</taxon>
    </lineage>
</organism>
<sequence length="477" mass="51051">MKVTLPEFERAGVMVVGDVMLDRYWYGPTSRISPEAPVPVVKVNTIEERPGGAANVAMNIASLGANARLVGLTGIDDAARALSKSLADVNVKCDFVSVPTHPTITKLRVLSRNQQLIRLDFEEGFEGVDPQPLHERINQALSSIGALVLSDYAKGALASVQQMIQLARKAGVPVLIDPKGTDFERYRGATLLTPNLSEFEAVVGKCKTEEEIVERGMKLIADYELSALLVTRSEQGMSLLQPGKAPLHMPTQAQEVYDVTGAGDTVIGVLAATLAAGNSLEEACFFANAAAGVVVGKLGTSTVSPIELENAVRGRADTGFGVMTEEELKLAVAAARKRGEKVVMTNGVFDILHAGHVSYLANARKLGDRLIVAVNSDASTKRLKGDSRPVNPLEQRMIVLGALEAVDWVVSFEEDTPQRLIAGILPDLLVKGGDYKPEEIAGSKEVWANGGEVLVLNFEDGCSTTNIIKKIQQDKKG</sequence>
<feature type="chain" id="PRO_1000185799" description="Bifunctional protein HldE">
    <location>
        <begin position="1"/>
        <end position="477"/>
    </location>
</feature>
<feature type="region of interest" description="Ribokinase">
    <location>
        <begin position="1"/>
        <end position="318"/>
    </location>
</feature>
<feature type="region of interest" description="Cytidylyltransferase">
    <location>
        <begin position="344"/>
        <end position="477"/>
    </location>
</feature>
<feature type="active site" evidence="1">
    <location>
        <position position="264"/>
    </location>
</feature>
<feature type="binding site" evidence="1">
    <location>
        <begin position="195"/>
        <end position="198"/>
    </location>
    <ligand>
        <name>ATP</name>
        <dbReference type="ChEBI" id="CHEBI:30616"/>
    </ligand>
</feature>
<feature type="modified residue" description="N6-acetyllysine" evidence="1">
    <location>
        <position position="179"/>
    </location>
</feature>
<dbReference type="EC" id="2.7.1.167" evidence="1"/>
<dbReference type="EC" id="2.7.7.70" evidence="1"/>
<dbReference type="EMBL" id="FM180568">
    <property type="protein sequence ID" value="CAS10893.1"/>
    <property type="molecule type" value="Genomic_DNA"/>
</dbReference>
<dbReference type="RefSeq" id="WP_000869178.1">
    <property type="nucleotide sequence ID" value="NC_011601.1"/>
</dbReference>
<dbReference type="SMR" id="B7UIW0"/>
<dbReference type="GeneID" id="75205361"/>
<dbReference type="KEGG" id="ecg:E2348C_3345"/>
<dbReference type="HOGENOM" id="CLU_021150_2_1_6"/>
<dbReference type="UniPathway" id="UPA00356">
    <property type="reaction ID" value="UER00437"/>
</dbReference>
<dbReference type="UniPathway" id="UPA00356">
    <property type="reaction ID" value="UER00439"/>
</dbReference>
<dbReference type="Proteomes" id="UP000008205">
    <property type="component" value="Chromosome"/>
</dbReference>
<dbReference type="GO" id="GO:0005829">
    <property type="term" value="C:cytosol"/>
    <property type="evidence" value="ECO:0007669"/>
    <property type="project" value="TreeGrafter"/>
</dbReference>
<dbReference type="GO" id="GO:0005524">
    <property type="term" value="F:ATP binding"/>
    <property type="evidence" value="ECO:0007669"/>
    <property type="project" value="UniProtKB-UniRule"/>
</dbReference>
<dbReference type="GO" id="GO:0033785">
    <property type="term" value="F:heptose 7-phosphate kinase activity"/>
    <property type="evidence" value="ECO:0007669"/>
    <property type="project" value="UniProtKB-UniRule"/>
</dbReference>
<dbReference type="GO" id="GO:0033786">
    <property type="term" value="F:heptose-1-phosphate adenylyltransferase activity"/>
    <property type="evidence" value="ECO:0007669"/>
    <property type="project" value="UniProtKB-UniRule"/>
</dbReference>
<dbReference type="GO" id="GO:0016773">
    <property type="term" value="F:phosphotransferase activity, alcohol group as acceptor"/>
    <property type="evidence" value="ECO:0007669"/>
    <property type="project" value="InterPro"/>
</dbReference>
<dbReference type="GO" id="GO:0097171">
    <property type="term" value="P:ADP-L-glycero-beta-D-manno-heptose biosynthetic process"/>
    <property type="evidence" value="ECO:0007669"/>
    <property type="project" value="UniProtKB-UniPathway"/>
</dbReference>
<dbReference type="CDD" id="cd01172">
    <property type="entry name" value="RfaE_like"/>
    <property type="match status" value="1"/>
</dbReference>
<dbReference type="FunFam" id="3.40.1190.20:FF:000002">
    <property type="entry name" value="Bifunctional protein HldE"/>
    <property type="match status" value="1"/>
</dbReference>
<dbReference type="FunFam" id="3.40.50.620:FF:000028">
    <property type="entry name" value="Bifunctional protein HldE"/>
    <property type="match status" value="1"/>
</dbReference>
<dbReference type="Gene3D" id="3.40.1190.20">
    <property type="match status" value="1"/>
</dbReference>
<dbReference type="Gene3D" id="3.40.50.620">
    <property type="entry name" value="HUPs"/>
    <property type="match status" value="1"/>
</dbReference>
<dbReference type="HAMAP" id="MF_01603">
    <property type="entry name" value="HldE"/>
    <property type="match status" value="1"/>
</dbReference>
<dbReference type="InterPro" id="IPR023030">
    <property type="entry name" value="Bifunc_HldE"/>
</dbReference>
<dbReference type="InterPro" id="IPR002173">
    <property type="entry name" value="Carboh/pur_kinase_PfkB_CS"/>
</dbReference>
<dbReference type="InterPro" id="IPR004821">
    <property type="entry name" value="Cyt_trans-like"/>
</dbReference>
<dbReference type="InterPro" id="IPR011611">
    <property type="entry name" value="PfkB_dom"/>
</dbReference>
<dbReference type="InterPro" id="IPR011913">
    <property type="entry name" value="RfaE_dom_I"/>
</dbReference>
<dbReference type="InterPro" id="IPR011914">
    <property type="entry name" value="RfaE_dom_II"/>
</dbReference>
<dbReference type="InterPro" id="IPR029056">
    <property type="entry name" value="Ribokinase-like"/>
</dbReference>
<dbReference type="InterPro" id="IPR014729">
    <property type="entry name" value="Rossmann-like_a/b/a_fold"/>
</dbReference>
<dbReference type="NCBIfam" id="TIGR00125">
    <property type="entry name" value="cyt_tran_rel"/>
    <property type="match status" value="1"/>
</dbReference>
<dbReference type="NCBIfam" id="NF008454">
    <property type="entry name" value="PRK11316.1"/>
    <property type="match status" value="1"/>
</dbReference>
<dbReference type="NCBIfam" id="TIGR02198">
    <property type="entry name" value="rfaE_dom_I"/>
    <property type="match status" value="1"/>
</dbReference>
<dbReference type="NCBIfam" id="TIGR02199">
    <property type="entry name" value="rfaE_dom_II"/>
    <property type="match status" value="1"/>
</dbReference>
<dbReference type="PANTHER" id="PTHR46969">
    <property type="entry name" value="BIFUNCTIONAL PROTEIN HLDE"/>
    <property type="match status" value="1"/>
</dbReference>
<dbReference type="PANTHER" id="PTHR46969:SF1">
    <property type="entry name" value="BIFUNCTIONAL PROTEIN HLDE"/>
    <property type="match status" value="1"/>
</dbReference>
<dbReference type="Pfam" id="PF01467">
    <property type="entry name" value="CTP_transf_like"/>
    <property type="match status" value="1"/>
</dbReference>
<dbReference type="Pfam" id="PF00294">
    <property type="entry name" value="PfkB"/>
    <property type="match status" value="1"/>
</dbReference>
<dbReference type="SUPFAM" id="SSF52374">
    <property type="entry name" value="Nucleotidylyl transferase"/>
    <property type="match status" value="1"/>
</dbReference>
<dbReference type="SUPFAM" id="SSF53613">
    <property type="entry name" value="Ribokinase-like"/>
    <property type="match status" value="1"/>
</dbReference>
<dbReference type="PROSITE" id="PS00583">
    <property type="entry name" value="PFKB_KINASES_1"/>
    <property type="match status" value="1"/>
</dbReference>
<reference key="1">
    <citation type="journal article" date="2009" name="J. Bacteriol.">
        <title>Complete genome sequence and comparative genome analysis of enteropathogenic Escherichia coli O127:H6 strain E2348/69.</title>
        <authorList>
            <person name="Iguchi A."/>
            <person name="Thomson N.R."/>
            <person name="Ogura Y."/>
            <person name="Saunders D."/>
            <person name="Ooka T."/>
            <person name="Henderson I.R."/>
            <person name="Harris D."/>
            <person name="Asadulghani M."/>
            <person name="Kurokawa K."/>
            <person name="Dean P."/>
            <person name="Kenny B."/>
            <person name="Quail M.A."/>
            <person name="Thurston S."/>
            <person name="Dougan G."/>
            <person name="Hayashi T."/>
            <person name="Parkhill J."/>
            <person name="Frankel G."/>
        </authorList>
    </citation>
    <scope>NUCLEOTIDE SEQUENCE [LARGE SCALE GENOMIC DNA]</scope>
    <source>
        <strain>E2348/69 / EPEC</strain>
    </source>
</reference>
<proteinExistence type="inferred from homology"/>
<comment type="function">
    <text evidence="1">Catalyzes the phosphorylation of D-glycero-D-manno-heptose 7-phosphate at the C-1 position to selectively form D-glycero-beta-D-manno-heptose-1,7-bisphosphate.</text>
</comment>
<comment type="function">
    <text evidence="1">Catalyzes the ADP transfer from ATP to D-glycero-beta-D-manno-heptose 1-phosphate, yielding ADP-D-glycero-beta-D-manno-heptose.</text>
</comment>
<comment type="catalytic activity">
    <reaction evidence="1">
        <text>D-glycero-beta-D-manno-heptose 7-phosphate + ATP = D-glycero-beta-D-manno-heptose 1,7-bisphosphate + ADP + H(+)</text>
        <dbReference type="Rhea" id="RHEA:27473"/>
        <dbReference type="ChEBI" id="CHEBI:15378"/>
        <dbReference type="ChEBI" id="CHEBI:30616"/>
        <dbReference type="ChEBI" id="CHEBI:60204"/>
        <dbReference type="ChEBI" id="CHEBI:60208"/>
        <dbReference type="ChEBI" id="CHEBI:456216"/>
        <dbReference type="EC" id="2.7.1.167"/>
    </reaction>
</comment>
<comment type="catalytic activity">
    <reaction evidence="1">
        <text>D-glycero-beta-D-manno-heptose 1-phosphate + ATP + H(+) = ADP-D-glycero-beta-D-manno-heptose + diphosphate</text>
        <dbReference type="Rhea" id="RHEA:27465"/>
        <dbReference type="ChEBI" id="CHEBI:15378"/>
        <dbReference type="ChEBI" id="CHEBI:30616"/>
        <dbReference type="ChEBI" id="CHEBI:33019"/>
        <dbReference type="ChEBI" id="CHEBI:59967"/>
        <dbReference type="ChEBI" id="CHEBI:61593"/>
        <dbReference type="EC" id="2.7.7.70"/>
    </reaction>
</comment>
<comment type="pathway">
    <text evidence="1">Nucleotide-sugar biosynthesis; ADP-L-glycero-beta-D-manno-heptose biosynthesis; ADP-L-glycero-beta-D-manno-heptose from D-glycero-beta-D-manno-heptose 7-phosphate: step 1/4.</text>
</comment>
<comment type="pathway">
    <text evidence="1">Nucleotide-sugar biosynthesis; ADP-L-glycero-beta-D-manno-heptose biosynthesis; ADP-L-glycero-beta-D-manno-heptose from D-glycero-beta-D-manno-heptose 7-phosphate: step 3/4.</text>
</comment>
<comment type="subunit">
    <text evidence="1">Homodimer.</text>
</comment>
<comment type="similarity">
    <text evidence="1">In the N-terminal section; belongs to the carbohydrate kinase PfkB family.</text>
</comment>
<comment type="similarity">
    <text evidence="1">In the C-terminal section; belongs to the cytidylyltransferase family.</text>
</comment>
<name>HLDE_ECO27</name>
<protein>
    <recommendedName>
        <fullName evidence="1">Bifunctional protein HldE</fullName>
    </recommendedName>
    <domain>
        <recommendedName>
            <fullName evidence="1">D-beta-D-heptose 7-phosphate kinase</fullName>
            <ecNumber evidence="1">2.7.1.167</ecNumber>
        </recommendedName>
        <alternativeName>
            <fullName evidence="1">D-beta-D-heptose 7-phosphotransferase</fullName>
        </alternativeName>
        <alternativeName>
            <fullName evidence="1">D-glycero-beta-D-manno-heptose-7-phosphate kinase</fullName>
        </alternativeName>
    </domain>
    <domain>
        <recommendedName>
            <fullName evidence="1">D-beta-D-heptose 1-phosphate adenylyltransferase</fullName>
            <ecNumber evidence="1">2.7.7.70</ecNumber>
        </recommendedName>
        <alternativeName>
            <fullName evidence="1">D-glycero-beta-D-manno-heptose 1-phosphate adenylyltransferase</fullName>
        </alternativeName>
    </domain>
</protein>